<reference key="1">
    <citation type="journal article" date="1993" name="Infect. Immun.">
        <title>Lipid modification of the 17-kilodalton membrane immunogen of Treponema pallidum determines macrophage activation as well as amphiphilicity.</title>
        <authorList>
            <person name="Akins D.R."/>
            <person name="Purcell B.K."/>
            <person name="Mitra M.M."/>
            <person name="Norgard M.V."/>
            <person name="Radolf J.D."/>
        </authorList>
    </citation>
    <scope>NUCLEOTIDE SEQUENCE [GENOMIC DNA]</scope>
</reference>
<reference key="2">
    <citation type="journal article" date="1998" name="Science">
        <title>Complete genome sequence of Treponema pallidum, the syphilis spirochete.</title>
        <authorList>
            <person name="Fraser C.M."/>
            <person name="Norris S.J."/>
            <person name="Weinstock G.M."/>
            <person name="White O."/>
            <person name="Sutton G.G."/>
            <person name="Dodson R.J."/>
            <person name="Gwinn M.L."/>
            <person name="Hickey E.K."/>
            <person name="Clayton R.A."/>
            <person name="Ketchum K.A."/>
            <person name="Sodergren E."/>
            <person name="Hardham J.M."/>
            <person name="McLeod M.P."/>
            <person name="Salzberg S.L."/>
            <person name="Peterson J.D."/>
            <person name="Khalak H.G."/>
            <person name="Richardson D.L."/>
            <person name="Howell J.K."/>
            <person name="Chidambaram M."/>
            <person name="Utterback T.R."/>
            <person name="McDonald L.A."/>
            <person name="Artiach P."/>
            <person name="Bowman C."/>
            <person name="Cotton M.D."/>
            <person name="Fujii C."/>
            <person name="Garland S.A."/>
            <person name="Hatch B."/>
            <person name="Horst K."/>
            <person name="Roberts K.M."/>
            <person name="Sandusky M."/>
            <person name="Weidman J.F."/>
            <person name="Smith H.O."/>
            <person name="Venter J.C."/>
        </authorList>
    </citation>
    <scope>NUCLEOTIDE SEQUENCE [LARGE SCALE GENOMIC DNA]</scope>
    <source>
        <strain>Nichols</strain>
    </source>
</reference>
<protein>
    <recommendedName>
        <fullName>17 kDa lipoprotein</fullName>
    </recommendedName>
</protein>
<gene>
    <name type="primary">tpp17</name>
    <name type="ordered locus">TP_0435</name>
</gene>
<name>TA17_TREPA</name>
<keyword id="KW-0002">3D-structure</keyword>
<keyword id="KW-1003">Cell membrane</keyword>
<keyword id="KW-0449">Lipoprotein</keyword>
<keyword id="KW-0472">Membrane</keyword>
<keyword id="KW-0564">Palmitate</keyword>
<keyword id="KW-1185">Reference proteome</keyword>
<keyword id="KW-0732">Signal</keyword>
<comment type="subcellular location">
    <subcellularLocation>
        <location evidence="1">Cell membrane</location>
        <topology evidence="1">Lipid-anchor</topology>
    </subcellularLocation>
</comment>
<accession>P29722</accession>
<dbReference type="EMBL" id="M74825">
    <property type="protein sequence ID" value="AAA27472.1"/>
    <property type="molecule type" value="Genomic_DNA"/>
</dbReference>
<dbReference type="EMBL" id="AE000520">
    <property type="protein sequence ID" value="AAC65423.1"/>
    <property type="molecule type" value="Genomic_DNA"/>
</dbReference>
<dbReference type="PIR" id="C71323">
    <property type="entry name" value="C71323"/>
</dbReference>
<dbReference type="RefSeq" id="WP_010881883.1">
    <property type="nucleotide sequence ID" value="NC_021490.2"/>
</dbReference>
<dbReference type="PDB" id="4U3Q">
    <property type="method" value="X-ray"/>
    <property type="resolution" value="2.40 A"/>
    <property type="chains" value="A/B=33-154"/>
</dbReference>
<dbReference type="PDBsum" id="4U3Q"/>
<dbReference type="SMR" id="P29722"/>
<dbReference type="IntAct" id="P29722">
    <property type="interactions" value="18"/>
</dbReference>
<dbReference type="STRING" id="243276.TP_0435"/>
<dbReference type="EnsemblBacteria" id="AAC65423">
    <property type="protein sequence ID" value="AAC65423"/>
    <property type="gene ID" value="TP_0435"/>
</dbReference>
<dbReference type="KEGG" id="tpa:TP_0435"/>
<dbReference type="KEGG" id="tpw:TPANIC_0435"/>
<dbReference type="eggNOG" id="COG3015">
    <property type="taxonomic scope" value="Bacteria"/>
</dbReference>
<dbReference type="HOGENOM" id="CLU_1685798_0_0_12"/>
<dbReference type="OrthoDB" id="5348860at2"/>
<dbReference type="EvolutionaryTrace" id="P29722"/>
<dbReference type="Proteomes" id="UP000000811">
    <property type="component" value="Chromosome"/>
</dbReference>
<dbReference type="GO" id="GO:0005886">
    <property type="term" value="C:plasma membrane"/>
    <property type="evidence" value="ECO:0007669"/>
    <property type="project" value="UniProtKB-SubCell"/>
</dbReference>
<dbReference type="Gene3D" id="2.40.128.640">
    <property type="match status" value="1"/>
</dbReference>
<dbReference type="InterPro" id="IPR007298">
    <property type="entry name" value="Cu-R_lipoprotein_NlpE"/>
</dbReference>
<dbReference type="Pfam" id="PF04170">
    <property type="entry name" value="NlpE"/>
    <property type="match status" value="1"/>
</dbReference>
<proteinExistence type="evidence at protein level"/>
<organism>
    <name type="scientific">Treponema pallidum (strain Nichols)</name>
    <dbReference type="NCBI Taxonomy" id="243276"/>
    <lineage>
        <taxon>Bacteria</taxon>
        <taxon>Pseudomonadati</taxon>
        <taxon>Spirochaetota</taxon>
        <taxon>Spirochaetia</taxon>
        <taxon>Spirochaetales</taxon>
        <taxon>Treponemataceae</taxon>
        <taxon>Treponema</taxon>
    </lineage>
</organism>
<evidence type="ECO:0000305" key="1"/>
<evidence type="ECO:0007829" key="2">
    <source>
        <dbReference type="PDB" id="4U3Q"/>
    </source>
</evidence>
<feature type="signal peptide">
    <location>
        <begin position="1"/>
        <end position="21"/>
    </location>
</feature>
<feature type="chain" id="PRO_0000018200" description="17 kDa lipoprotein">
    <location>
        <begin position="22"/>
        <end position="156"/>
    </location>
</feature>
<feature type="lipid moiety-binding region" description="N-palmitoyl cysteine" evidence="1">
    <location>
        <position position="22"/>
    </location>
</feature>
<feature type="lipid moiety-binding region" description="S-diacylglycerol cysteine" evidence="1">
    <location>
        <position position="22"/>
    </location>
</feature>
<feature type="helix" evidence="2">
    <location>
        <begin position="35"/>
        <end position="44"/>
    </location>
</feature>
<feature type="strand" evidence="2">
    <location>
        <begin position="47"/>
        <end position="52"/>
    </location>
</feature>
<feature type="strand" evidence="2">
    <location>
        <begin position="62"/>
        <end position="67"/>
    </location>
</feature>
<feature type="strand" evidence="2">
    <location>
        <begin position="71"/>
        <end position="78"/>
    </location>
</feature>
<feature type="strand" evidence="2">
    <location>
        <begin position="89"/>
        <end position="97"/>
    </location>
</feature>
<feature type="strand" evidence="2">
    <location>
        <begin position="99"/>
        <end position="101"/>
    </location>
</feature>
<feature type="strand" evidence="2">
    <location>
        <begin position="103"/>
        <end position="108"/>
    </location>
</feature>
<feature type="strand" evidence="2">
    <location>
        <begin position="119"/>
        <end position="126"/>
    </location>
</feature>
<feature type="strand" evidence="2">
    <location>
        <begin position="129"/>
        <end position="136"/>
    </location>
</feature>
<feature type="helix" evidence="2">
    <location>
        <begin position="146"/>
        <end position="149"/>
    </location>
</feature>
<feature type="strand" evidence="2">
    <location>
        <begin position="150"/>
        <end position="153"/>
    </location>
</feature>
<sequence>MKGSVRALCAFLGVGALGSALCVSCTTVCPHAGKAKAEKVECALKGGIFRGTLPAADCPGIDTTVTFNADGTAQKVELALEKKSAPSPLTYRGTWMVREDGIVELSLVSSEQSKAPHEKELYELIDSNSVRYMGAPGAGKPSKEMAPFYVLKKTKK</sequence>